<name>Y1734_PARPJ</name>
<feature type="chain" id="PRO_1000198326" description="UPF0303 protein Bphyt_1734">
    <location>
        <begin position="1"/>
        <end position="165"/>
    </location>
</feature>
<accession>B2T3I1</accession>
<dbReference type="EMBL" id="CP001052">
    <property type="protein sequence ID" value="ACD16142.1"/>
    <property type="molecule type" value="Genomic_DNA"/>
</dbReference>
<dbReference type="RefSeq" id="WP_012432751.1">
    <property type="nucleotide sequence ID" value="NC_010681.1"/>
</dbReference>
<dbReference type="SMR" id="B2T3I1"/>
<dbReference type="KEGG" id="bpy:Bphyt_1734"/>
<dbReference type="eggNOG" id="COG4702">
    <property type="taxonomic scope" value="Bacteria"/>
</dbReference>
<dbReference type="HOGENOM" id="CLU_101036_2_2_4"/>
<dbReference type="OrthoDB" id="9815315at2"/>
<dbReference type="Proteomes" id="UP000001739">
    <property type="component" value="Chromosome 1"/>
</dbReference>
<dbReference type="Gene3D" id="3.30.450.150">
    <property type="entry name" value="Haem-degrading domain"/>
    <property type="match status" value="1"/>
</dbReference>
<dbReference type="HAMAP" id="MF_00761">
    <property type="entry name" value="UPF0303"/>
    <property type="match status" value="1"/>
</dbReference>
<dbReference type="InterPro" id="IPR005624">
    <property type="entry name" value="PduO/GlcC-like"/>
</dbReference>
<dbReference type="InterPro" id="IPR038084">
    <property type="entry name" value="PduO/GlcC-like_sf"/>
</dbReference>
<dbReference type="InterPro" id="IPR010371">
    <property type="entry name" value="YBR137W-like"/>
</dbReference>
<dbReference type="NCBIfam" id="NF002695">
    <property type="entry name" value="PRK02487.1-4"/>
    <property type="match status" value="1"/>
</dbReference>
<dbReference type="NCBIfam" id="NF002696">
    <property type="entry name" value="PRK02487.1-5"/>
    <property type="match status" value="1"/>
</dbReference>
<dbReference type="PANTHER" id="PTHR28255">
    <property type="match status" value="1"/>
</dbReference>
<dbReference type="PANTHER" id="PTHR28255:SF1">
    <property type="entry name" value="UPF0303 PROTEIN YBR137W"/>
    <property type="match status" value="1"/>
</dbReference>
<dbReference type="Pfam" id="PF03928">
    <property type="entry name" value="HbpS-like"/>
    <property type="match status" value="1"/>
</dbReference>
<dbReference type="PIRSF" id="PIRSF008757">
    <property type="entry name" value="UCP008757"/>
    <property type="match status" value="1"/>
</dbReference>
<dbReference type="SUPFAM" id="SSF143744">
    <property type="entry name" value="GlcG-like"/>
    <property type="match status" value="1"/>
</dbReference>
<reference key="1">
    <citation type="journal article" date="2011" name="J. Bacteriol.">
        <title>Complete genome sequence of the plant growth-promoting endophyte Burkholderia phytofirmans strain PsJN.</title>
        <authorList>
            <person name="Weilharter A."/>
            <person name="Mitter B."/>
            <person name="Shin M.V."/>
            <person name="Chain P.S."/>
            <person name="Nowak J."/>
            <person name="Sessitsch A."/>
        </authorList>
    </citation>
    <scope>NUCLEOTIDE SEQUENCE [LARGE SCALE GENOMIC DNA]</scope>
    <source>
        <strain>DSM 17436 / LMG 22146 / PsJN</strain>
    </source>
</reference>
<evidence type="ECO:0000255" key="1">
    <source>
        <dbReference type="HAMAP-Rule" id="MF_00761"/>
    </source>
</evidence>
<protein>
    <recommendedName>
        <fullName evidence="1">UPF0303 protein Bphyt_1734</fullName>
    </recommendedName>
</protein>
<sequence length="165" mass="17715">MDIAHDLQVIAAQEHTLVFPQFDADRAWQVGAYLHEVAKARGIPVAIDVRTFGQPLFFSLLDGATPDNIDWVRRKSNTVAHFRRSSYAIGLKLQQAGGTLADKHALAASEYASHGGAFPLTVAHAGVIGSITVSGLPQRADHELVVEALCAHLGHDYSKLALAKA</sequence>
<gene>
    <name type="ordered locus">Bphyt_1734</name>
</gene>
<organism>
    <name type="scientific">Paraburkholderia phytofirmans (strain DSM 17436 / LMG 22146 / PsJN)</name>
    <name type="common">Burkholderia phytofirmans</name>
    <dbReference type="NCBI Taxonomy" id="398527"/>
    <lineage>
        <taxon>Bacteria</taxon>
        <taxon>Pseudomonadati</taxon>
        <taxon>Pseudomonadota</taxon>
        <taxon>Betaproteobacteria</taxon>
        <taxon>Burkholderiales</taxon>
        <taxon>Burkholderiaceae</taxon>
        <taxon>Paraburkholderia</taxon>
    </lineage>
</organism>
<proteinExistence type="inferred from homology"/>
<comment type="similarity">
    <text evidence="1">Belongs to the UPF0303 family.</text>
</comment>